<gene>
    <name evidence="1" type="primary">rplJ</name>
    <name type="ordered locus">Bcen2424_0338</name>
</gene>
<proteinExistence type="inferred from homology"/>
<protein>
    <recommendedName>
        <fullName evidence="1">Large ribosomal subunit protein uL10</fullName>
    </recommendedName>
    <alternativeName>
        <fullName evidence="2">50S ribosomal protein L10</fullName>
    </alternativeName>
</protein>
<comment type="function">
    <text evidence="1">Forms part of the ribosomal stalk, playing a central role in the interaction of the ribosome with GTP-bound translation factors.</text>
</comment>
<comment type="subunit">
    <text evidence="1">Part of the ribosomal stalk of the 50S ribosomal subunit. The N-terminus interacts with L11 and the large rRNA to form the base of the stalk. The C-terminus forms an elongated spine to which L12 dimers bind in a sequential fashion forming a multimeric L10(L12)X complex.</text>
</comment>
<comment type="similarity">
    <text evidence="1">Belongs to the universal ribosomal protein uL10 family.</text>
</comment>
<organism>
    <name type="scientific">Burkholderia cenocepacia (strain HI2424)</name>
    <dbReference type="NCBI Taxonomy" id="331272"/>
    <lineage>
        <taxon>Bacteria</taxon>
        <taxon>Pseudomonadati</taxon>
        <taxon>Pseudomonadota</taxon>
        <taxon>Betaproteobacteria</taxon>
        <taxon>Burkholderiales</taxon>
        <taxon>Burkholderiaceae</taxon>
        <taxon>Burkholderia</taxon>
        <taxon>Burkholderia cepacia complex</taxon>
    </lineage>
</organism>
<name>RL10_BURCH</name>
<keyword id="KW-0687">Ribonucleoprotein</keyword>
<keyword id="KW-0689">Ribosomal protein</keyword>
<keyword id="KW-0694">RNA-binding</keyword>
<keyword id="KW-0699">rRNA-binding</keyword>
<dbReference type="EMBL" id="CP000458">
    <property type="protein sequence ID" value="ABK07092.1"/>
    <property type="molecule type" value="Genomic_DNA"/>
</dbReference>
<dbReference type="RefSeq" id="WP_011546647.1">
    <property type="nucleotide sequence ID" value="NC_008542.1"/>
</dbReference>
<dbReference type="SMR" id="A0K3L5"/>
<dbReference type="GeneID" id="83047121"/>
<dbReference type="KEGG" id="bch:Bcen2424_0338"/>
<dbReference type="HOGENOM" id="CLU_092227_0_1_4"/>
<dbReference type="GO" id="GO:1990904">
    <property type="term" value="C:ribonucleoprotein complex"/>
    <property type="evidence" value="ECO:0007669"/>
    <property type="project" value="UniProtKB-KW"/>
</dbReference>
<dbReference type="GO" id="GO:0005840">
    <property type="term" value="C:ribosome"/>
    <property type="evidence" value="ECO:0007669"/>
    <property type="project" value="UniProtKB-KW"/>
</dbReference>
<dbReference type="GO" id="GO:0070180">
    <property type="term" value="F:large ribosomal subunit rRNA binding"/>
    <property type="evidence" value="ECO:0007669"/>
    <property type="project" value="UniProtKB-UniRule"/>
</dbReference>
<dbReference type="GO" id="GO:0006412">
    <property type="term" value="P:translation"/>
    <property type="evidence" value="ECO:0007669"/>
    <property type="project" value="UniProtKB-UniRule"/>
</dbReference>
<dbReference type="CDD" id="cd05797">
    <property type="entry name" value="Ribosomal_L10"/>
    <property type="match status" value="1"/>
</dbReference>
<dbReference type="Gene3D" id="3.30.70.1730">
    <property type="match status" value="1"/>
</dbReference>
<dbReference type="Gene3D" id="6.10.250.290">
    <property type="match status" value="1"/>
</dbReference>
<dbReference type="HAMAP" id="MF_00362">
    <property type="entry name" value="Ribosomal_uL10"/>
    <property type="match status" value="1"/>
</dbReference>
<dbReference type="InterPro" id="IPR001790">
    <property type="entry name" value="Ribosomal_uL10"/>
</dbReference>
<dbReference type="InterPro" id="IPR043141">
    <property type="entry name" value="Ribosomal_uL10-like_sf"/>
</dbReference>
<dbReference type="InterPro" id="IPR022973">
    <property type="entry name" value="Ribosomal_uL10_bac"/>
</dbReference>
<dbReference type="InterPro" id="IPR047865">
    <property type="entry name" value="Ribosomal_uL10_bac_type"/>
</dbReference>
<dbReference type="NCBIfam" id="NF000955">
    <property type="entry name" value="PRK00099.1-1"/>
    <property type="match status" value="1"/>
</dbReference>
<dbReference type="PANTHER" id="PTHR11560">
    <property type="entry name" value="39S RIBOSOMAL PROTEIN L10, MITOCHONDRIAL"/>
    <property type="match status" value="1"/>
</dbReference>
<dbReference type="Pfam" id="PF00466">
    <property type="entry name" value="Ribosomal_L10"/>
    <property type="match status" value="1"/>
</dbReference>
<dbReference type="SUPFAM" id="SSF160369">
    <property type="entry name" value="Ribosomal protein L10-like"/>
    <property type="match status" value="1"/>
</dbReference>
<feature type="chain" id="PRO_1000005476" description="Large ribosomal subunit protein uL10">
    <location>
        <begin position="1"/>
        <end position="165"/>
    </location>
</feature>
<evidence type="ECO:0000255" key="1">
    <source>
        <dbReference type="HAMAP-Rule" id="MF_00362"/>
    </source>
</evidence>
<evidence type="ECO:0000305" key="2"/>
<accession>A0K3L5</accession>
<reference key="1">
    <citation type="submission" date="2006-08" db="EMBL/GenBank/DDBJ databases">
        <title>Complete sequence of chromosome 1 of Burkholderia cenocepacia HI2424.</title>
        <authorList>
            <person name="Copeland A."/>
            <person name="Lucas S."/>
            <person name="Lapidus A."/>
            <person name="Barry K."/>
            <person name="Detter J.C."/>
            <person name="Glavina del Rio T."/>
            <person name="Hammon N."/>
            <person name="Israni S."/>
            <person name="Pitluck S."/>
            <person name="Chain P."/>
            <person name="Malfatti S."/>
            <person name="Shin M."/>
            <person name="Vergez L."/>
            <person name="Schmutz J."/>
            <person name="Larimer F."/>
            <person name="Land M."/>
            <person name="Hauser L."/>
            <person name="Kyrpides N."/>
            <person name="Kim E."/>
            <person name="LiPuma J.J."/>
            <person name="Gonzalez C.F."/>
            <person name="Konstantinidis K."/>
            <person name="Tiedje J.M."/>
            <person name="Richardson P."/>
        </authorList>
    </citation>
    <scope>NUCLEOTIDE SEQUENCE [LARGE SCALE GENOMIC DNA]</scope>
    <source>
        <strain>HI2424</strain>
    </source>
</reference>
<sequence>MPLNREDKQAVVAEVSAQVAKAQTVVLAEYRGIAVGDLTKLRAKAREQQVYLRVLKNTLARRAVEGTPFAPLAEQMTGPLIYGISEDAIAAAKVVNDFSKSNEKLVIKAGSFDGKVMDKAGVQALASIPSREELLSKLLFVMQSPVSGFARALAALAEKKQAEAA</sequence>